<comment type="function">
    <text evidence="1">Involved in host translation shutoff without degradating host RNA. By suppressing host gene expression, facilitates the evasion from host type I interferon immune response.</text>
</comment>
<protein>
    <recommendedName>
        <fullName>Host translation inhibitor 5b</fullName>
        <shortName>ns5b</shortName>
    </recommendedName>
    <alternativeName>
        <fullName>Accessory protein 5b</fullName>
    </alternativeName>
</protein>
<organismHost>
    <name type="scientific">Gallus gallus</name>
    <name type="common">Chicken</name>
    <dbReference type="NCBI Taxonomy" id="9031"/>
</organismHost>
<organism>
    <name type="scientific">Avian infectious bronchitis virus (strain M41)</name>
    <name type="common">IBV</name>
    <dbReference type="NCBI Taxonomy" id="11127"/>
    <lineage>
        <taxon>Viruses</taxon>
        <taxon>Riboviria</taxon>
        <taxon>Orthornavirae</taxon>
        <taxon>Pisuviricota</taxon>
        <taxon>Pisoniviricetes</taxon>
        <taxon>Nidovirales</taxon>
        <taxon>Cornidovirineae</taxon>
        <taxon>Coronaviridae</taxon>
        <taxon>Orthocoronavirinae</taxon>
        <taxon>Gammacoronavirus</taxon>
        <taxon>Igacovirus</taxon>
        <taxon>Avian coronavirus</taxon>
    </lineage>
</organism>
<evidence type="ECO:0000269" key="1">
    <source>
    </source>
</evidence>
<dbReference type="EMBL" id="AF469015">
    <property type="protein sequence ID" value="AAO33445.1"/>
    <property type="molecule type" value="Genomic_RNA"/>
</dbReference>
<dbReference type="EMBL" id="DQ834384">
    <property type="protein sequence ID" value="ABI26429.1"/>
    <property type="molecule type" value="Genomic_RNA"/>
</dbReference>
<dbReference type="EMBL" id="AY851295">
    <property type="protein sequence ID" value="AAW33792.1"/>
    <property type="molecule type" value="Genomic_RNA"/>
</dbReference>
<dbReference type="Proteomes" id="UP000007642">
    <property type="component" value="Genome"/>
</dbReference>
<dbReference type="Proteomes" id="UP000096468">
    <property type="component" value="Genome"/>
</dbReference>
<dbReference type="GO" id="GO:0039657">
    <property type="term" value="P:symbiont-mediated suppression of host gene expression"/>
    <property type="evidence" value="ECO:0007669"/>
    <property type="project" value="UniProtKB-KW"/>
</dbReference>
<dbReference type="GO" id="GO:0052170">
    <property type="term" value="P:symbiont-mediated suppression of host innate immune response"/>
    <property type="evidence" value="ECO:0007669"/>
    <property type="project" value="UniProtKB-KW"/>
</dbReference>
<dbReference type="InterPro" id="IPR008458">
    <property type="entry name" value="Acc_prot_5b_avian_CoV"/>
</dbReference>
<dbReference type="Pfam" id="PF05528">
    <property type="entry name" value="Acc5b_avian_CoV"/>
    <property type="match status" value="1"/>
</dbReference>
<name>NS5B_IBVM</name>
<proteinExistence type="predicted"/>
<gene>
    <name type="ORF">5b</name>
</gene>
<reference key="1">
    <citation type="journal article" date="2004" name="Virus Res.">
        <title>Comparisons of envelope through 5B sequences of infectious bronchitis coronaviruses indicates recombination occurs in the envelope and membrane genes.</title>
        <authorList>
            <person name="Brooks J.E."/>
            <person name="Rainer A.C."/>
            <person name="Parr R.L."/>
            <person name="Woolcock P."/>
            <person name="Hoerr F."/>
            <person name="Collisson E.W."/>
        </authorList>
    </citation>
    <scope>NUCLEOTIDE SEQUENCE [GENOMIC RNA]</scope>
</reference>
<reference key="2">
    <citation type="submission" date="2006-06" db="EMBL/GenBank/DDBJ databases">
        <title>Avian infectious bronchitis virus strain M41.</title>
        <authorList>
            <person name="Mondal S.P."/>
            <person name="Buckles E.L."/>
        </authorList>
    </citation>
    <scope>NUCLEOTIDE SEQUENCE [GENOMIC RNA]</scope>
</reference>
<reference key="3">
    <citation type="journal article" date="2006" name="J. Virol. Methods">
        <title>Development and evaluation of a real-time Taqman RT-PCR assay for the detection of infectious bronchitis virus from infected chickens.</title>
        <authorList>
            <person name="Callison S.A."/>
            <person name="Hilt D.A."/>
            <person name="Boynton T.O."/>
            <person name="Sample B.F."/>
            <person name="Robison R."/>
            <person name="Swayne D.E."/>
            <person name="Jackwood M.W."/>
        </authorList>
    </citation>
    <scope>NUCLEOTIDE SEQUENCE [GENOMIC RNA]</scope>
</reference>
<reference key="4">
    <citation type="journal article" date="2016" name="J. Virol.">
        <title>Infectious Bronchitis Coronavirus Limits Interferon Production by Inducing a Host Shutoff That Requires Accessory Protein 5b.</title>
        <authorList>
            <person name="Kint J."/>
            <person name="Langereis M.A."/>
            <person name="Maier H.J."/>
            <person name="Britton P."/>
            <person name="van Kuppeveld F.J."/>
            <person name="Koumans J."/>
            <person name="Wiegertjes G.F."/>
            <person name="Forlenza M."/>
        </authorList>
    </citation>
    <scope>FUNCTION</scope>
</reference>
<feature type="chain" id="PRO_0000283927" description="Host translation inhibitor 5b">
    <location>
        <begin position="1"/>
        <end position="82"/>
    </location>
</feature>
<feature type="sequence variant">
    <original>S</original>
    <variation>P</variation>
    <location>
        <position position="45"/>
    </location>
</feature>
<feature type="sequence variant">
    <original>M</original>
    <variation>T</variation>
    <location>
        <position position="75"/>
    </location>
</feature>
<keyword id="KW-1262">Eukaryotic host gene expression shutoff by virus</keyword>
<keyword id="KW-1190">Host gene expression shutoff by virus</keyword>
<keyword id="KW-0945">Host-virus interaction</keyword>
<keyword id="KW-1090">Inhibition of host innate immune response by virus</keyword>
<keyword id="KW-0922">Interferon antiviral system evasion</keyword>
<keyword id="KW-0899">Viral immunoevasion</keyword>
<accession>Q80RZ3</accession>
<accession>Q5I5X3</accession>
<sequence>MNNSKDNPFCGAIARKARIYLREGLDCVYFLNKAGQAESCPACTSLVFQGKTCEEHKYNNNLLSWQAVRQLERQMPQLQSSN</sequence>